<protein>
    <recommendedName>
        <fullName evidence="1">Protein GrpE</fullName>
    </recommendedName>
    <alternativeName>
        <fullName evidence="1">HSP-70 cofactor</fullName>
    </alternativeName>
</protein>
<gene>
    <name evidence="1" type="primary">grpE</name>
    <name type="ordered locus">BAD_1546</name>
</gene>
<reference key="1">
    <citation type="submission" date="2006-12" db="EMBL/GenBank/DDBJ databases">
        <title>Bifidobacterium adolescentis complete genome sequence.</title>
        <authorList>
            <person name="Suzuki T."/>
            <person name="Tsuda Y."/>
            <person name="Kanou N."/>
            <person name="Inoue T."/>
            <person name="Kumazaki K."/>
            <person name="Nagano S."/>
            <person name="Hirai S."/>
            <person name="Tanaka K."/>
            <person name="Watanabe K."/>
        </authorList>
    </citation>
    <scope>NUCLEOTIDE SEQUENCE [LARGE SCALE GENOMIC DNA]</scope>
    <source>
        <strain>ATCC 15703 / DSM 20083 / NCTC 11814 / E194a</strain>
    </source>
</reference>
<feature type="chain" id="PRO_1000053545" description="Protein GrpE">
    <location>
        <begin position="1"/>
        <end position="222"/>
    </location>
</feature>
<feature type="region of interest" description="Disordered" evidence="2">
    <location>
        <begin position="1"/>
        <end position="82"/>
    </location>
</feature>
<feature type="compositionally biased region" description="Low complexity" evidence="2">
    <location>
        <begin position="20"/>
        <end position="71"/>
    </location>
</feature>
<evidence type="ECO:0000255" key="1">
    <source>
        <dbReference type="HAMAP-Rule" id="MF_01151"/>
    </source>
</evidence>
<evidence type="ECO:0000256" key="2">
    <source>
        <dbReference type="SAM" id="MobiDB-lite"/>
    </source>
</evidence>
<comment type="function">
    <text evidence="1">Participates actively in the response to hyperosmotic and heat shock by preventing the aggregation of stress-denatured proteins, in association with DnaK and GrpE. It is the nucleotide exchange factor for DnaK and may function as a thermosensor. Unfolded proteins bind initially to DnaJ; upon interaction with the DnaJ-bound protein, DnaK hydrolyzes its bound ATP, resulting in the formation of a stable complex. GrpE releases ADP from DnaK; ATP binding to DnaK triggers the release of the substrate protein, thus completing the reaction cycle. Several rounds of ATP-dependent interactions between DnaJ, DnaK and GrpE are required for fully efficient folding.</text>
</comment>
<comment type="subunit">
    <text evidence="1">Homodimer.</text>
</comment>
<comment type="subcellular location">
    <subcellularLocation>
        <location evidence="1">Cytoplasm</location>
    </subcellularLocation>
</comment>
<comment type="similarity">
    <text evidence="1">Belongs to the GrpE family.</text>
</comment>
<dbReference type="EMBL" id="AP009256">
    <property type="protein sequence ID" value="BAF40327.1"/>
    <property type="molecule type" value="Genomic_DNA"/>
</dbReference>
<dbReference type="RefSeq" id="WP_011743844.1">
    <property type="nucleotide sequence ID" value="NC_008618.1"/>
</dbReference>
<dbReference type="SMR" id="A1A3P4"/>
<dbReference type="STRING" id="367928.BAD_1546"/>
<dbReference type="GeneID" id="4556141"/>
<dbReference type="KEGG" id="bad:BAD_1546"/>
<dbReference type="HOGENOM" id="CLU_057217_4_0_11"/>
<dbReference type="Proteomes" id="UP000008702">
    <property type="component" value="Chromosome"/>
</dbReference>
<dbReference type="GO" id="GO:0005737">
    <property type="term" value="C:cytoplasm"/>
    <property type="evidence" value="ECO:0007669"/>
    <property type="project" value="UniProtKB-SubCell"/>
</dbReference>
<dbReference type="GO" id="GO:0000774">
    <property type="term" value="F:adenyl-nucleotide exchange factor activity"/>
    <property type="evidence" value="ECO:0007669"/>
    <property type="project" value="InterPro"/>
</dbReference>
<dbReference type="GO" id="GO:0042803">
    <property type="term" value="F:protein homodimerization activity"/>
    <property type="evidence" value="ECO:0007669"/>
    <property type="project" value="InterPro"/>
</dbReference>
<dbReference type="GO" id="GO:0051087">
    <property type="term" value="F:protein-folding chaperone binding"/>
    <property type="evidence" value="ECO:0007669"/>
    <property type="project" value="InterPro"/>
</dbReference>
<dbReference type="GO" id="GO:0051082">
    <property type="term" value="F:unfolded protein binding"/>
    <property type="evidence" value="ECO:0007669"/>
    <property type="project" value="TreeGrafter"/>
</dbReference>
<dbReference type="GO" id="GO:0006457">
    <property type="term" value="P:protein folding"/>
    <property type="evidence" value="ECO:0007669"/>
    <property type="project" value="InterPro"/>
</dbReference>
<dbReference type="CDD" id="cd00446">
    <property type="entry name" value="GrpE"/>
    <property type="match status" value="1"/>
</dbReference>
<dbReference type="FunFam" id="2.30.22.10:FF:000001">
    <property type="entry name" value="Protein GrpE"/>
    <property type="match status" value="1"/>
</dbReference>
<dbReference type="Gene3D" id="3.90.20.20">
    <property type="match status" value="1"/>
</dbReference>
<dbReference type="Gene3D" id="2.30.22.10">
    <property type="entry name" value="Head domain of nucleotide exchange factor GrpE"/>
    <property type="match status" value="1"/>
</dbReference>
<dbReference type="HAMAP" id="MF_01151">
    <property type="entry name" value="GrpE"/>
    <property type="match status" value="1"/>
</dbReference>
<dbReference type="InterPro" id="IPR000740">
    <property type="entry name" value="GrpE"/>
</dbReference>
<dbReference type="InterPro" id="IPR013805">
    <property type="entry name" value="GrpE_coiled_coil"/>
</dbReference>
<dbReference type="InterPro" id="IPR009012">
    <property type="entry name" value="GrpE_head"/>
</dbReference>
<dbReference type="NCBIfam" id="NF010754">
    <property type="entry name" value="PRK14157.1"/>
    <property type="match status" value="1"/>
</dbReference>
<dbReference type="PANTHER" id="PTHR21237">
    <property type="entry name" value="GRPE PROTEIN"/>
    <property type="match status" value="1"/>
</dbReference>
<dbReference type="PANTHER" id="PTHR21237:SF23">
    <property type="entry name" value="GRPE PROTEIN HOMOLOG, MITOCHONDRIAL"/>
    <property type="match status" value="1"/>
</dbReference>
<dbReference type="Pfam" id="PF01025">
    <property type="entry name" value="GrpE"/>
    <property type="match status" value="1"/>
</dbReference>
<dbReference type="PRINTS" id="PR00773">
    <property type="entry name" value="GRPEPROTEIN"/>
</dbReference>
<dbReference type="SUPFAM" id="SSF58014">
    <property type="entry name" value="Coiled-coil domain of nucleotide exchange factor GrpE"/>
    <property type="match status" value="1"/>
</dbReference>
<dbReference type="SUPFAM" id="SSF51064">
    <property type="entry name" value="Head domain of nucleotide exchange factor GrpE"/>
    <property type="match status" value="1"/>
</dbReference>
<dbReference type="PROSITE" id="PS01071">
    <property type="entry name" value="GRPE"/>
    <property type="match status" value="1"/>
</dbReference>
<keyword id="KW-0143">Chaperone</keyword>
<keyword id="KW-0963">Cytoplasm</keyword>
<keyword id="KW-1185">Reference proteome</keyword>
<keyword id="KW-0346">Stress response</keyword>
<proteinExistence type="inferred from homology"/>
<accession>A1A3P4</accession>
<organism>
    <name type="scientific">Bifidobacterium adolescentis (strain ATCC 15703 / DSM 20083 / NCTC 11814 / E194a)</name>
    <dbReference type="NCBI Taxonomy" id="367928"/>
    <lineage>
        <taxon>Bacteria</taxon>
        <taxon>Bacillati</taxon>
        <taxon>Actinomycetota</taxon>
        <taxon>Actinomycetes</taxon>
        <taxon>Bifidobacteriales</taxon>
        <taxon>Bifidobacteriaceae</taxon>
        <taxon>Bifidobacterium</taxon>
    </lineage>
</organism>
<sequence>MSDFNKDEYLNDLPDMDDLSGQAAPAAASADSAAAAAGATQEGAAQPAAAQSQENGDSAAADGADKAGAADGKADDTLTPLGQAKKEAAEYLEALQRERAEFINFRNRAQKEQERFRQHGIIDVLTALLPALDDIDRIREHSEMDDSFKAVANKIDKAFEKFGVEKFGEKGEDFDPTKHDAILHKPDPNAEKETVDTVVEAGYRIGDRVIRAARVVVASPQN</sequence>
<name>GRPE_BIFAA</name>